<accession>Q9M063</accession>
<accession>F4JJ68</accession>
<gene>
    <name type="ordered locus">At4g40100</name>
    <name type="ORF">T5J17.2</name>
</gene>
<evidence type="ECO:0000256" key="1">
    <source>
        <dbReference type="SAM" id="MobiDB-lite"/>
    </source>
</evidence>
<evidence type="ECO:0000305" key="2"/>
<reference key="1">
    <citation type="journal article" date="1999" name="Nature">
        <title>Sequence and analysis of chromosome 4 of the plant Arabidopsis thaliana.</title>
        <authorList>
            <person name="Mayer K.F.X."/>
            <person name="Schueller C."/>
            <person name="Wambutt R."/>
            <person name="Murphy G."/>
            <person name="Volckaert G."/>
            <person name="Pohl T."/>
            <person name="Duesterhoeft A."/>
            <person name="Stiekema W."/>
            <person name="Entian K.-D."/>
            <person name="Terryn N."/>
            <person name="Harris B."/>
            <person name="Ansorge W."/>
            <person name="Brandt P."/>
            <person name="Grivell L.A."/>
            <person name="Rieger M."/>
            <person name="Weichselgartner M."/>
            <person name="de Simone V."/>
            <person name="Obermaier B."/>
            <person name="Mache R."/>
            <person name="Mueller M."/>
            <person name="Kreis M."/>
            <person name="Delseny M."/>
            <person name="Puigdomenech P."/>
            <person name="Watson M."/>
            <person name="Schmidtheini T."/>
            <person name="Reichert B."/>
            <person name="Portetelle D."/>
            <person name="Perez-Alonso M."/>
            <person name="Boutry M."/>
            <person name="Bancroft I."/>
            <person name="Vos P."/>
            <person name="Hoheisel J."/>
            <person name="Zimmermann W."/>
            <person name="Wedler H."/>
            <person name="Ridley P."/>
            <person name="Langham S.-A."/>
            <person name="McCullagh B."/>
            <person name="Bilham L."/>
            <person name="Robben J."/>
            <person name="van der Schueren J."/>
            <person name="Grymonprez B."/>
            <person name="Chuang Y.-J."/>
            <person name="Vandenbussche F."/>
            <person name="Braeken M."/>
            <person name="Weltjens I."/>
            <person name="Voet M."/>
            <person name="Bastiaens I."/>
            <person name="Aert R."/>
            <person name="Defoor E."/>
            <person name="Weitzenegger T."/>
            <person name="Bothe G."/>
            <person name="Ramsperger U."/>
            <person name="Hilbert H."/>
            <person name="Braun M."/>
            <person name="Holzer E."/>
            <person name="Brandt A."/>
            <person name="Peters S."/>
            <person name="van Staveren M."/>
            <person name="Dirkse W."/>
            <person name="Mooijman P."/>
            <person name="Klein Lankhorst R."/>
            <person name="Rose M."/>
            <person name="Hauf J."/>
            <person name="Koetter P."/>
            <person name="Berneiser S."/>
            <person name="Hempel S."/>
            <person name="Feldpausch M."/>
            <person name="Lamberth S."/>
            <person name="Van den Daele H."/>
            <person name="De Keyser A."/>
            <person name="Buysshaert C."/>
            <person name="Gielen J."/>
            <person name="Villarroel R."/>
            <person name="De Clercq R."/>
            <person name="van Montagu M."/>
            <person name="Rogers J."/>
            <person name="Cronin A."/>
            <person name="Quail M.A."/>
            <person name="Bray-Allen S."/>
            <person name="Clark L."/>
            <person name="Doggett J."/>
            <person name="Hall S."/>
            <person name="Kay M."/>
            <person name="Lennard N."/>
            <person name="McLay K."/>
            <person name="Mayes R."/>
            <person name="Pettett A."/>
            <person name="Rajandream M.A."/>
            <person name="Lyne M."/>
            <person name="Benes V."/>
            <person name="Rechmann S."/>
            <person name="Borkova D."/>
            <person name="Bloecker H."/>
            <person name="Scharfe M."/>
            <person name="Grimm M."/>
            <person name="Loehnert T.-H."/>
            <person name="Dose S."/>
            <person name="de Haan M."/>
            <person name="Maarse A.C."/>
            <person name="Schaefer M."/>
            <person name="Mueller-Auer S."/>
            <person name="Gabel C."/>
            <person name="Fuchs M."/>
            <person name="Fartmann B."/>
            <person name="Granderath K."/>
            <person name="Dauner D."/>
            <person name="Herzl A."/>
            <person name="Neumann S."/>
            <person name="Argiriou A."/>
            <person name="Vitale D."/>
            <person name="Liguori R."/>
            <person name="Piravandi E."/>
            <person name="Massenet O."/>
            <person name="Quigley F."/>
            <person name="Clabauld G."/>
            <person name="Muendlein A."/>
            <person name="Felber R."/>
            <person name="Schnabl S."/>
            <person name="Hiller R."/>
            <person name="Schmidt W."/>
            <person name="Lecharny A."/>
            <person name="Aubourg S."/>
            <person name="Chefdor F."/>
            <person name="Cooke R."/>
            <person name="Berger C."/>
            <person name="Monfort A."/>
            <person name="Casacuberta E."/>
            <person name="Gibbons T."/>
            <person name="Weber N."/>
            <person name="Vandenbol M."/>
            <person name="Bargues M."/>
            <person name="Terol J."/>
            <person name="Torres A."/>
            <person name="Perez-Perez A."/>
            <person name="Purnelle B."/>
            <person name="Bent E."/>
            <person name="Johnson S."/>
            <person name="Tacon D."/>
            <person name="Jesse T."/>
            <person name="Heijnen L."/>
            <person name="Schwarz S."/>
            <person name="Scholler P."/>
            <person name="Heber S."/>
            <person name="Francs P."/>
            <person name="Bielke C."/>
            <person name="Frishman D."/>
            <person name="Haase D."/>
            <person name="Lemcke K."/>
            <person name="Mewes H.-W."/>
            <person name="Stocker S."/>
            <person name="Zaccaria P."/>
            <person name="Bevan M."/>
            <person name="Wilson R.K."/>
            <person name="de la Bastide M."/>
            <person name="Habermann K."/>
            <person name="Parnell L."/>
            <person name="Dedhia N."/>
            <person name="Gnoj L."/>
            <person name="Schutz K."/>
            <person name="Huang E."/>
            <person name="Spiegel L."/>
            <person name="Sekhon M."/>
            <person name="Murray J."/>
            <person name="Sheet P."/>
            <person name="Cordes M."/>
            <person name="Abu-Threideh J."/>
            <person name="Stoneking T."/>
            <person name="Kalicki J."/>
            <person name="Graves T."/>
            <person name="Harmon G."/>
            <person name="Edwards J."/>
            <person name="Latreille P."/>
            <person name="Courtney L."/>
            <person name="Cloud J."/>
            <person name="Abbott A."/>
            <person name="Scott K."/>
            <person name="Johnson D."/>
            <person name="Minx P."/>
            <person name="Bentley D."/>
            <person name="Fulton B."/>
            <person name="Miller N."/>
            <person name="Greco T."/>
            <person name="Kemp K."/>
            <person name="Kramer J."/>
            <person name="Fulton L."/>
            <person name="Mardis E."/>
            <person name="Dante M."/>
            <person name="Pepin K."/>
            <person name="Hillier L.W."/>
            <person name="Nelson J."/>
            <person name="Spieth J."/>
            <person name="Ryan E."/>
            <person name="Andrews S."/>
            <person name="Geisel C."/>
            <person name="Layman D."/>
            <person name="Du H."/>
            <person name="Ali J."/>
            <person name="Berghoff A."/>
            <person name="Jones K."/>
            <person name="Drone K."/>
            <person name="Cotton M."/>
            <person name="Joshu C."/>
            <person name="Antonoiu B."/>
            <person name="Zidanic M."/>
            <person name="Strong C."/>
            <person name="Sun H."/>
            <person name="Lamar B."/>
            <person name="Yordan C."/>
            <person name="Ma P."/>
            <person name="Zhong J."/>
            <person name="Preston R."/>
            <person name="Vil D."/>
            <person name="Shekher M."/>
            <person name="Matero A."/>
            <person name="Shah R."/>
            <person name="Swaby I.K."/>
            <person name="O'Shaughnessy A."/>
            <person name="Rodriguez M."/>
            <person name="Hoffman J."/>
            <person name="Till S."/>
            <person name="Granat S."/>
            <person name="Shohdy N."/>
            <person name="Hasegawa A."/>
            <person name="Hameed A."/>
            <person name="Lodhi M."/>
            <person name="Johnson A."/>
            <person name="Chen E."/>
            <person name="Marra M.A."/>
            <person name="Martienssen R."/>
            <person name="McCombie W.R."/>
        </authorList>
    </citation>
    <scope>NUCLEOTIDE SEQUENCE [LARGE SCALE GENOMIC DNA]</scope>
    <source>
        <strain>cv. Columbia</strain>
    </source>
</reference>
<reference key="2">
    <citation type="journal article" date="2017" name="Plant J.">
        <title>Araport11: a complete reannotation of the Arabidopsis thaliana reference genome.</title>
        <authorList>
            <person name="Cheng C.Y."/>
            <person name="Krishnakumar V."/>
            <person name="Chan A.P."/>
            <person name="Thibaud-Nissen F."/>
            <person name="Schobel S."/>
            <person name="Town C.D."/>
        </authorList>
    </citation>
    <scope>GENOME REANNOTATION</scope>
    <source>
        <strain>cv. Columbia</strain>
    </source>
</reference>
<proteinExistence type="inferred from homology"/>
<feature type="chain" id="PRO_0000311667" description="Putative GEM-like protein 3">
    <location>
        <begin position="1"/>
        <end position="239"/>
    </location>
</feature>
<feature type="domain" description="GRAM">
    <location>
        <begin position="128"/>
        <end position="191"/>
    </location>
</feature>
<feature type="region of interest" description="Disordered" evidence="1">
    <location>
        <begin position="29"/>
        <end position="68"/>
    </location>
</feature>
<dbReference type="EMBL" id="AL161596">
    <property type="protein sequence ID" value="CAB80673.1"/>
    <property type="status" value="ALT_SEQ"/>
    <property type="molecule type" value="Genomic_DNA"/>
</dbReference>
<dbReference type="EMBL" id="CP002687">
    <property type="protein sequence ID" value="AEE87167.1"/>
    <property type="status" value="ALT_SEQ"/>
    <property type="molecule type" value="Genomic_DNA"/>
</dbReference>
<dbReference type="PIR" id="C85475">
    <property type="entry name" value="C85475"/>
</dbReference>
<dbReference type="RefSeq" id="NP_195720.1">
    <property type="nucleotide sequence ID" value="NM_120176.1"/>
</dbReference>
<dbReference type="SMR" id="Q9M063"/>
<dbReference type="BioGRID" id="15453">
    <property type="interactions" value="1"/>
</dbReference>
<dbReference type="PaxDb" id="3702-AT4G40100.1"/>
<dbReference type="ProteomicsDB" id="224771"/>
<dbReference type="GeneID" id="830173"/>
<dbReference type="KEGG" id="ath:AT4G40100"/>
<dbReference type="Araport" id="AT4G40100"/>
<dbReference type="TAIR" id="AT4G40100"/>
<dbReference type="eggNOG" id="ENOG502QUT3">
    <property type="taxonomic scope" value="Eukaryota"/>
</dbReference>
<dbReference type="HOGENOM" id="CLU_063785_1_0_1"/>
<dbReference type="InParanoid" id="Q9M063"/>
<dbReference type="PhylomeDB" id="Q9M063"/>
<dbReference type="PRO" id="PR:Q9M063"/>
<dbReference type="Proteomes" id="UP000006548">
    <property type="component" value="Chromosome 4"/>
</dbReference>
<dbReference type="Gene3D" id="2.30.29.30">
    <property type="entry name" value="Pleckstrin-homology domain (PH domain)/Phosphotyrosine-binding domain (PTB)"/>
    <property type="match status" value="1"/>
</dbReference>
<dbReference type="InterPro" id="IPR037848">
    <property type="entry name" value="GEM-like"/>
</dbReference>
<dbReference type="InterPro" id="IPR004182">
    <property type="entry name" value="GRAM"/>
</dbReference>
<dbReference type="InterPro" id="IPR011993">
    <property type="entry name" value="PH-like_dom_sf"/>
</dbReference>
<dbReference type="PANTHER" id="PTHR31969">
    <property type="entry name" value="GEM-LIKE PROTEIN 2"/>
    <property type="match status" value="1"/>
</dbReference>
<dbReference type="Pfam" id="PF02893">
    <property type="entry name" value="GRAM"/>
    <property type="match status" value="1"/>
</dbReference>
<dbReference type="SMART" id="SM00568">
    <property type="entry name" value="GRAM"/>
    <property type="match status" value="1"/>
</dbReference>
<protein>
    <recommendedName>
        <fullName>Putative GEM-like protein 3</fullName>
    </recommendedName>
</protein>
<comment type="similarity">
    <text evidence="2">Belongs to the GEM family.</text>
</comment>
<comment type="sequence caution" evidence="2">
    <conflict type="erroneous gene model prediction">
        <sequence resource="EMBL-CDS" id="AEE87167"/>
    </conflict>
</comment>
<comment type="sequence caution" evidence="2">
    <conflict type="erroneous gene model prediction">
        <sequence resource="EMBL-CDS" id="CAB80673"/>
    </conflict>
</comment>
<keyword id="KW-1185">Reference proteome</keyword>
<organism>
    <name type="scientific">Arabidopsis thaliana</name>
    <name type="common">Mouse-ear cress</name>
    <dbReference type="NCBI Taxonomy" id="3702"/>
    <lineage>
        <taxon>Eukaryota</taxon>
        <taxon>Viridiplantae</taxon>
        <taxon>Streptophyta</taxon>
        <taxon>Embryophyta</taxon>
        <taxon>Tracheophyta</taxon>
        <taxon>Spermatophyta</taxon>
        <taxon>Magnoliopsida</taxon>
        <taxon>eudicotyledons</taxon>
        <taxon>Gunneridae</taxon>
        <taxon>Pentapetalae</taxon>
        <taxon>rosids</taxon>
        <taxon>malvids</taxon>
        <taxon>Brassicales</taxon>
        <taxon>Brassicaceae</taxon>
        <taxon>Camelineae</taxon>
        <taxon>Arabidopsis</taxon>
    </lineage>
</organism>
<name>GEML3_ARATH</name>
<sequence length="239" mass="26293">MNLLRYTSKSIQKAIEHRIEHRPDRENLHWNPELVSESPAPDEKALSSSSAARSNPYVARAPTETSDASLKETMESVKGVLGRWGRRVGEAAMKAESLAGNTWQHPLRAAMGRIAQSTKVLAEGGYEKIFRQTFETVPEEQLQNSFACYLSTSAGPVMGVLYVSTAKLAYCSDTSLVVIPLHQLKSVNPSISTVNPAEKYIQVISVDDHEFWFMGFLNYEGAVTSLQDTLQAGASVCVI</sequence>